<comment type="function">
    <text evidence="1">CRISPR (clustered regularly interspaced short palindromic repeat), is an adaptive immune system that provides protection against mobile genetic elements (viruses, transposable elements and conjugative plasmids). CRISPR clusters contain sequences complementary to antecedent mobile elements and target invading nucleic acids. CRISPR clusters are transcribed and processed into CRISPR RNA (crRNA). Functions as a ssRNA-specific endoribonuclease. Involved in the integration of spacer DNA into the CRISPR cassette.</text>
</comment>
<comment type="cofactor">
    <cofactor evidence="1">
        <name>Mg(2+)</name>
        <dbReference type="ChEBI" id="CHEBI:18420"/>
    </cofactor>
</comment>
<comment type="subunit">
    <text evidence="1">Homodimer, forms a heterotetramer with a Cas1 homodimer.</text>
</comment>
<comment type="similarity">
    <text evidence="1">Belongs to the CRISPR-associated endoribonuclease Cas2 protein family.</text>
</comment>
<organism>
    <name type="scientific">Streptococcus mutans serotype c (strain ATCC 700610 / UA159)</name>
    <dbReference type="NCBI Taxonomy" id="210007"/>
    <lineage>
        <taxon>Bacteria</taxon>
        <taxon>Bacillati</taxon>
        <taxon>Bacillota</taxon>
        <taxon>Bacilli</taxon>
        <taxon>Lactobacillales</taxon>
        <taxon>Streptococcaceae</taxon>
        <taxon>Streptococcus</taxon>
    </lineage>
</organism>
<name>CAS2_STRMU</name>
<sequence length="109" mass="12634">MRMILMFDMPTDTAEERKAYRKFRKFLLSEGFIMHQFSVYSKLLLNNSANTAMIARLKENNPKKGNITLLTVTEKQFARMIYLNGERDTSIANSDSRLVFLGEAFPDET</sequence>
<proteinExistence type="inferred from homology"/>
<reference key="1">
    <citation type="journal article" date="2002" name="Proc. Natl. Acad. Sci. U.S.A.">
        <title>Genome sequence of Streptococcus mutans UA159, a cariogenic dental pathogen.</title>
        <authorList>
            <person name="Ajdic D.J."/>
            <person name="McShan W.M."/>
            <person name="McLaughlin R.E."/>
            <person name="Savic G."/>
            <person name="Chang J."/>
            <person name="Carson M.B."/>
            <person name="Primeaux C."/>
            <person name="Tian R."/>
            <person name="Kenton S."/>
            <person name="Jia H.G."/>
            <person name="Lin S.P."/>
            <person name="Qian Y."/>
            <person name="Li S."/>
            <person name="Zhu H."/>
            <person name="Najar F.Z."/>
            <person name="Lai H."/>
            <person name="White J."/>
            <person name="Roe B.A."/>
            <person name="Ferretti J.J."/>
        </authorList>
    </citation>
    <scope>NUCLEOTIDE SEQUENCE [LARGE SCALE GENOMIC DNA]</scope>
    <source>
        <strain>ATCC 700610 / UA159</strain>
    </source>
</reference>
<evidence type="ECO:0000255" key="1">
    <source>
        <dbReference type="HAMAP-Rule" id="MF_01471"/>
    </source>
</evidence>
<gene>
    <name evidence="1" type="primary">cas2</name>
    <name type="ordered locus">SMU_1403c</name>
</gene>
<accession>Q8DTE5</accession>
<dbReference type="EC" id="3.1.-.-" evidence="1"/>
<dbReference type="EMBL" id="AE014133">
    <property type="protein sequence ID" value="AAN59068.1"/>
    <property type="molecule type" value="Genomic_DNA"/>
</dbReference>
<dbReference type="RefSeq" id="NP_721762.1">
    <property type="nucleotide sequence ID" value="NC_004350.2"/>
</dbReference>
<dbReference type="SMR" id="Q8DTE5"/>
<dbReference type="STRING" id="210007.SMU_1403c"/>
<dbReference type="DNASU" id="1029503"/>
<dbReference type="KEGG" id="smu:SMU_1403c"/>
<dbReference type="PATRIC" id="fig|210007.7.peg.1248"/>
<dbReference type="eggNOG" id="COG3512">
    <property type="taxonomic scope" value="Bacteria"/>
</dbReference>
<dbReference type="HOGENOM" id="CLU_150500_1_1_9"/>
<dbReference type="OrthoDB" id="9791737at2"/>
<dbReference type="Proteomes" id="UP000002512">
    <property type="component" value="Chromosome"/>
</dbReference>
<dbReference type="GO" id="GO:0046872">
    <property type="term" value="F:metal ion binding"/>
    <property type="evidence" value="ECO:0007669"/>
    <property type="project" value="UniProtKB-UniRule"/>
</dbReference>
<dbReference type="GO" id="GO:0004521">
    <property type="term" value="F:RNA endonuclease activity"/>
    <property type="evidence" value="ECO:0007669"/>
    <property type="project" value="InterPro"/>
</dbReference>
<dbReference type="GO" id="GO:0051607">
    <property type="term" value="P:defense response to virus"/>
    <property type="evidence" value="ECO:0007669"/>
    <property type="project" value="UniProtKB-UniRule"/>
</dbReference>
<dbReference type="GO" id="GO:0043571">
    <property type="term" value="P:maintenance of CRISPR repeat elements"/>
    <property type="evidence" value="ECO:0007669"/>
    <property type="project" value="UniProtKB-UniRule"/>
</dbReference>
<dbReference type="CDD" id="cd09638">
    <property type="entry name" value="Cas2_I_II_III"/>
    <property type="match status" value="1"/>
</dbReference>
<dbReference type="Gene3D" id="3.30.70.240">
    <property type="match status" value="1"/>
</dbReference>
<dbReference type="HAMAP" id="MF_01471">
    <property type="entry name" value="Cas2"/>
    <property type="match status" value="1"/>
</dbReference>
<dbReference type="InterPro" id="IPR021127">
    <property type="entry name" value="CRISPR_associated_Cas2"/>
</dbReference>
<dbReference type="InterPro" id="IPR019199">
    <property type="entry name" value="Virulence_VapD/CRISPR_Cas2"/>
</dbReference>
<dbReference type="NCBIfam" id="TIGR01573">
    <property type="entry name" value="cas2"/>
    <property type="match status" value="1"/>
</dbReference>
<dbReference type="Pfam" id="PF09827">
    <property type="entry name" value="CRISPR_Cas2"/>
    <property type="match status" value="1"/>
</dbReference>
<dbReference type="SUPFAM" id="SSF143430">
    <property type="entry name" value="TTP0101/SSO1404-like"/>
    <property type="match status" value="1"/>
</dbReference>
<feature type="chain" id="PRO_0000417729" description="CRISPR-associated endoribonuclease Cas2">
    <location>
        <begin position="1"/>
        <end position="109"/>
    </location>
</feature>
<feature type="binding site" evidence="1">
    <location>
        <position position="8"/>
    </location>
    <ligand>
        <name>Mg(2+)</name>
        <dbReference type="ChEBI" id="CHEBI:18420"/>
        <note>catalytic</note>
    </ligand>
</feature>
<protein>
    <recommendedName>
        <fullName evidence="1">CRISPR-associated endoribonuclease Cas2</fullName>
        <ecNumber evidence="1">3.1.-.-</ecNumber>
    </recommendedName>
</protein>
<keyword id="KW-0051">Antiviral defense</keyword>
<keyword id="KW-0255">Endonuclease</keyword>
<keyword id="KW-0378">Hydrolase</keyword>
<keyword id="KW-0460">Magnesium</keyword>
<keyword id="KW-0479">Metal-binding</keyword>
<keyword id="KW-0540">Nuclease</keyword>
<keyword id="KW-1185">Reference proteome</keyword>